<protein>
    <recommendedName>
        <fullName evidence="1">CinA-like protein</fullName>
    </recommendedName>
</protein>
<name>CINAL_LEPIC</name>
<proteinExistence type="inferred from homology"/>
<gene>
    <name type="ordered locus">LIC_12101</name>
</gene>
<comment type="similarity">
    <text evidence="1">Belongs to the CinA family.</text>
</comment>
<accession>Q72QL2</accession>
<evidence type="ECO:0000255" key="1">
    <source>
        <dbReference type="HAMAP-Rule" id="MF_00226"/>
    </source>
</evidence>
<organism>
    <name type="scientific">Leptospira interrogans serogroup Icterohaemorrhagiae serovar copenhageni (strain Fiocruz L1-130)</name>
    <dbReference type="NCBI Taxonomy" id="267671"/>
    <lineage>
        <taxon>Bacteria</taxon>
        <taxon>Pseudomonadati</taxon>
        <taxon>Spirochaetota</taxon>
        <taxon>Spirochaetia</taxon>
        <taxon>Leptospirales</taxon>
        <taxon>Leptospiraceae</taxon>
        <taxon>Leptospira</taxon>
    </lineage>
</organism>
<reference key="1">
    <citation type="journal article" date="2004" name="J. Bacteriol.">
        <title>Comparative genomics of two Leptospira interrogans serovars reveals novel insights into physiology and pathogenesis.</title>
        <authorList>
            <person name="Nascimento A.L.T.O."/>
            <person name="Ko A.I."/>
            <person name="Martins E.A.L."/>
            <person name="Monteiro-Vitorello C.B."/>
            <person name="Ho P.L."/>
            <person name="Haake D.A."/>
            <person name="Verjovski-Almeida S."/>
            <person name="Hartskeerl R.A."/>
            <person name="Marques M.V."/>
            <person name="Oliveira M.C."/>
            <person name="Menck C.F.M."/>
            <person name="Leite L.C.C."/>
            <person name="Carrer H."/>
            <person name="Coutinho L.L."/>
            <person name="Degrave W.M."/>
            <person name="Dellagostin O.A."/>
            <person name="El-Dorry H."/>
            <person name="Ferro E.S."/>
            <person name="Ferro M.I.T."/>
            <person name="Furlan L.R."/>
            <person name="Gamberini M."/>
            <person name="Giglioti E.A."/>
            <person name="Goes-Neto A."/>
            <person name="Goldman G.H."/>
            <person name="Goldman M.H.S."/>
            <person name="Harakava R."/>
            <person name="Jeronimo S.M.B."/>
            <person name="Junqueira-de-Azevedo I.L.M."/>
            <person name="Kimura E.T."/>
            <person name="Kuramae E.E."/>
            <person name="Lemos E.G.M."/>
            <person name="Lemos M.V.F."/>
            <person name="Marino C.L."/>
            <person name="Nunes L.R."/>
            <person name="de Oliveira R.C."/>
            <person name="Pereira G.G."/>
            <person name="Reis M.S."/>
            <person name="Schriefer A."/>
            <person name="Siqueira W.J."/>
            <person name="Sommer P."/>
            <person name="Tsai S.M."/>
            <person name="Simpson A.J.G."/>
            <person name="Ferro J.A."/>
            <person name="Camargo L.E.A."/>
            <person name="Kitajima J.P."/>
            <person name="Setubal J.C."/>
            <person name="Van Sluys M.A."/>
        </authorList>
    </citation>
    <scope>NUCLEOTIDE SEQUENCE [LARGE SCALE GENOMIC DNA]</scope>
    <source>
        <strain>Fiocruz L1-130</strain>
    </source>
</reference>
<sequence>MFSPKIIILSTGSELTSGRSQDTNSSWIANELFGIGFTVSKLVVLPDDPEAILEELRTLVSLATKKNPVLLIMTGGLGPTEDDYTLEVVCKLKGVSSVESVVARQRIEAFYKLRGKNFQESLQTAIRQISVPKDSTILNNEVGIAPGFIVSLGENVHLGCMPGVPGEMTEMFREEFSTWILKKYSTRELHSGFRFIWWMSESQFQKEFISKEESVTSGKVIWGVAAKRGYIRVSFQSNERALVDFLLKKLDEIYGPKSTLDVFEELPKLLIEKKITVGTAESCTGGLISKIFTDKPGSSTYFYGGVISYDNGVKEGILGVKKNTLKEFGAVSMETAKEMAEGALVALGVDYSISVTGIAGPGGGTPQKKVGLVYFGIGQKNEKTETHEHYFPFPRSSFREFAAHTGIYLLYNRLKRLA</sequence>
<feature type="chain" id="PRO_0000336506" description="CinA-like protein">
    <location>
        <begin position="1"/>
        <end position="418"/>
    </location>
</feature>
<dbReference type="EMBL" id="AE016823">
    <property type="protein sequence ID" value="AAS70672.1"/>
    <property type="molecule type" value="Genomic_DNA"/>
</dbReference>
<dbReference type="RefSeq" id="WP_000492632.1">
    <property type="nucleotide sequence ID" value="NC_005823.1"/>
</dbReference>
<dbReference type="SMR" id="Q72QL2"/>
<dbReference type="KEGG" id="lic:LIC_12101"/>
<dbReference type="HOGENOM" id="CLU_030805_9_3_12"/>
<dbReference type="Proteomes" id="UP000007037">
    <property type="component" value="Chromosome I"/>
</dbReference>
<dbReference type="CDD" id="cd00885">
    <property type="entry name" value="cinA"/>
    <property type="match status" value="1"/>
</dbReference>
<dbReference type="Gene3D" id="3.90.950.20">
    <property type="entry name" value="CinA-like"/>
    <property type="match status" value="1"/>
</dbReference>
<dbReference type="Gene3D" id="3.40.980.10">
    <property type="entry name" value="MoaB/Mog-like domain"/>
    <property type="match status" value="1"/>
</dbReference>
<dbReference type="HAMAP" id="MF_00226_B">
    <property type="entry name" value="CinA_B"/>
    <property type="match status" value="1"/>
</dbReference>
<dbReference type="InterPro" id="IPR050101">
    <property type="entry name" value="CinA"/>
</dbReference>
<dbReference type="InterPro" id="IPR036653">
    <property type="entry name" value="CinA-like_C"/>
</dbReference>
<dbReference type="InterPro" id="IPR008136">
    <property type="entry name" value="CinA_C"/>
</dbReference>
<dbReference type="InterPro" id="IPR008135">
    <property type="entry name" value="Competence-induced_CinA"/>
</dbReference>
<dbReference type="InterPro" id="IPR036425">
    <property type="entry name" value="MoaB/Mog-like_dom_sf"/>
</dbReference>
<dbReference type="InterPro" id="IPR001453">
    <property type="entry name" value="MoaB/Mog_dom"/>
</dbReference>
<dbReference type="NCBIfam" id="TIGR00199">
    <property type="entry name" value="PncC_domain"/>
    <property type="match status" value="1"/>
</dbReference>
<dbReference type="PANTHER" id="PTHR13939">
    <property type="entry name" value="NICOTINAMIDE-NUCLEOTIDE AMIDOHYDROLASE PNCC"/>
    <property type="match status" value="1"/>
</dbReference>
<dbReference type="PANTHER" id="PTHR13939:SF0">
    <property type="entry name" value="NMN AMIDOHYDROLASE-LIKE PROTEIN YFAY"/>
    <property type="match status" value="1"/>
</dbReference>
<dbReference type="Pfam" id="PF02464">
    <property type="entry name" value="CinA"/>
    <property type="match status" value="1"/>
</dbReference>
<dbReference type="Pfam" id="PF00994">
    <property type="entry name" value="MoCF_biosynth"/>
    <property type="match status" value="1"/>
</dbReference>
<dbReference type="PIRSF" id="PIRSF006728">
    <property type="entry name" value="CinA"/>
    <property type="match status" value="1"/>
</dbReference>
<dbReference type="SMART" id="SM00852">
    <property type="entry name" value="MoCF_biosynth"/>
    <property type="match status" value="1"/>
</dbReference>
<dbReference type="SUPFAM" id="SSF142433">
    <property type="entry name" value="CinA-like"/>
    <property type="match status" value="1"/>
</dbReference>
<dbReference type="SUPFAM" id="SSF53218">
    <property type="entry name" value="Molybdenum cofactor biosynthesis proteins"/>
    <property type="match status" value="1"/>
</dbReference>